<dbReference type="EMBL" id="CP000089">
    <property type="protein sequence ID" value="AAZ44963.1"/>
    <property type="molecule type" value="Genomic_DNA"/>
</dbReference>
<dbReference type="SMR" id="Q47JL8"/>
<dbReference type="STRING" id="159087.Daro_0204"/>
<dbReference type="KEGG" id="dar:Daro_0204"/>
<dbReference type="eggNOG" id="COG1220">
    <property type="taxonomic scope" value="Bacteria"/>
</dbReference>
<dbReference type="HOGENOM" id="CLU_033123_0_0_4"/>
<dbReference type="OrthoDB" id="9804062at2"/>
<dbReference type="GO" id="GO:0009376">
    <property type="term" value="C:HslUV protease complex"/>
    <property type="evidence" value="ECO:0007669"/>
    <property type="project" value="UniProtKB-UniRule"/>
</dbReference>
<dbReference type="GO" id="GO:0005524">
    <property type="term" value="F:ATP binding"/>
    <property type="evidence" value="ECO:0007669"/>
    <property type="project" value="UniProtKB-UniRule"/>
</dbReference>
<dbReference type="GO" id="GO:0016887">
    <property type="term" value="F:ATP hydrolysis activity"/>
    <property type="evidence" value="ECO:0007669"/>
    <property type="project" value="InterPro"/>
</dbReference>
<dbReference type="GO" id="GO:0008233">
    <property type="term" value="F:peptidase activity"/>
    <property type="evidence" value="ECO:0007669"/>
    <property type="project" value="InterPro"/>
</dbReference>
<dbReference type="GO" id="GO:0036402">
    <property type="term" value="F:proteasome-activating activity"/>
    <property type="evidence" value="ECO:0007669"/>
    <property type="project" value="UniProtKB-UniRule"/>
</dbReference>
<dbReference type="GO" id="GO:0043335">
    <property type="term" value="P:protein unfolding"/>
    <property type="evidence" value="ECO:0007669"/>
    <property type="project" value="UniProtKB-UniRule"/>
</dbReference>
<dbReference type="GO" id="GO:0051603">
    <property type="term" value="P:proteolysis involved in protein catabolic process"/>
    <property type="evidence" value="ECO:0007669"/>
    <property type="project" value="TreeGrafter"/>
</dbReference>
<dbReference type="CDD" id="cd19498">
    <property type="entry name" value="RecA-like_HslU"/>
    <property type="match status" value="1"/>
</dbReference>
<dbReference type="FunFam" id="3.40.50.300:FF:000213">
    <property type="entry name" value="ATP-dependent protease ATPase subunit HslU"/>
    <property type="match status" value="1"/>
</dbReference>
<dbReference type="FunFam" id="3.40.50.300:FF:000220">
    <property type="entry name" value="ATP-dependent protease ATPase subunit HslU"/>
    <property type="match status" value="1"/>
</dbReference>
<dbReference type="Gene3D" id="1.10.8.60">
    <property type="match status" value="1"/>
</dbReference>
<dbReference type="Gene3D" id="1.10.8.10">
    <property type="entry name" value="DNA helicase RuvA subunit, C-terminal domain"/>
    <property type="match status" value="2"/>
</dbReference>
<dbReference type="Gene3D" id="3.40.50.300">
    <property type="entry name" value="P-loop containing nucleotide triphosphate hydrolases"/>
    <property type="match status" value="1"/>
</dbReference>
<dbReference type="HAMAP" id="MF_00249">
    <property type="entry name" value="HslU"/>
    <property type="match status" value="1"/>
</dbReference>
<dbReference type="InterPro" id="IPR003593">
    <property type="entry name" value="AAA+_ATPase"/>
</dbReference>
<dbReference type="InterPro" id="IPR050052">
    <property type="entry name" value="ATP-dep_Clp_protease_ClpX"/>
</dbReference>
<dbReference type="InterPro" id="IPR003959">
    <property type="entry name" value="ATPase_AAA_core"/>
</dbReference>
<dbReference type="InterPro" id="IPR019489">
    <property type="entry name" value="Clp_ATPase_C"/>
</dbReference>
<dbReference type="InterPro" id="IPR004491">
    <property type="entry name" value="HslU"/>
</dbReference>
<dbReference type="InterPro" id="IPR027417">
    <property type="entry name" value="P-loop_NTPase"/>
</dbReference>
<dbReference type="NCBIfam" id="TIGR00390">
    <property type="entry name" value="hslU"/>
    <property type="match status" value="1"/>
</dbReference>
<dbReference type="NCBIfam" id="NF003544">
    <property type="entry name" value="PRK05201.1"/>
    <property type="match status" value="1"/>
</dbReference>
<dbReference type="PANTHER" id="PTHR48102">
    <property type="entry name" value="ATP-DEPENDENT CLP PROTEASE ATP-BINDING SUBUNIT CLPX-LIKE, MITOCHONDRIAL-RELATED"/>
    <property type="match status" value="1"/>
</dbReference>
<dbReference type="PANTHER" id="PTHR48102:SF3">
    <property type="entry name" value="ATP-DEPENDENT PROTEASE ATPASE SUBUNIT HSLU"/>
    <property type="match status" value="1"/>
</dbReference>
<dbReference type="Pfam" id="PF00004">
    <property type="entry name" value="AAA"/>
    <property type="match status" value="1"/>
</dbReference>
<dbReference type="Pfam" id="PF07724">
    <property type="entry name" value="AAA_2"/>
    <property type="match status" value="1"/>
</dbReference>
<dbReference type="SMART" id="SM00382">
    <property type="entry name" value="AAA"/>
    <property type="match status" value="1"/>
</dbReference>
<dbReference type="SMART" id="SM01086">
    <property type="entry name" value="ClpB_D2-small"/>
    <property type="match status" value="1"/>
</dbReference>
<dbReference type="SUPFAM" id="SSF52540">
    <property type="entry name" value="P-loop containing nucleoside triphosphate hydrolases"/>
    <property type="match status" value="1"/>
</dbReference>
<accession>Q47JL8</accession>
<gene>
    <name evidence="1" type="primary">hslU</name>
    <name type="ordered locus">Daro_0204</name>
</gene>
<organism>
    <name type="scientific">Dechloromonas aromatica (strain RCB)</name>
    <dbReference type="NCBI Taxonomy" id="159087"/>
    <lineage>
        <taxon>Bacteria</taxon>
        <taxon>Pseudomonadati</taxon>
        <taxon>Pseudomonadota</taxon>
        <taxon>Betaproteobacteria</taxon>
        <taxon>Rhodocyclales</taxon>
        <taxon>Azonexaceae</taxon>
        <taxon>Dechloromonas</taxon>
    </lineage>
</organism>
<reference key="1">
    <citation type="journal article" date="2009" name="BMC Genomics">
        <title>Metabolic analysis of the soil microbe Dechloromonas aromatica str. RCB: indications of a surprisingly complex life-style and cryptic anaerobic pathways for aromatic degradation.</title>
        <authorList>
            <person name="Salinero K.K."/>
            <person name="Keller K."/>
            <person name="Feil W.S."/>
            <person name="Feil H."/>
            <person name="Trong S."/>
            <person name="Di Bartolo G."/>
            <person name="Lapidus A."/>
        </authorList>
    </citation>
    <scope>NUCLEOTIDE SEQUENCE [LARGE SCALE GENOMIC DNA]</scope>
    <source>
        <strain>RCB</strain>
    </source>
</reference>
<keyword id="KW-0067">ATP-binding</keyword>
<keyword id="KW-0143">Chaperone</keyword>
<keyword id="KW-0963">Cytoplasm</keyword>
<keyword id="KW-0547">Nucleotide-binding</keyword>
<keyword id="KW-0346">Stress response</keyword>
<evidence type="ECO:0000255" key="1">
    <source>
        <dbReference type="HAMAP-Rule" id="MF_00249"/>
    </source>
</evidence>
<comment type="function">
    <text evidence="1">ATPase subunit of a proteasome-like degradation complex; this subunit has chaperone activity. The binding of ATP and its subsequent hydrolysis by HslU are essential for unfolding of protein substrates subsequently hydrolyzed by HslV. HslU recognizes the N-terminal part of its protein substrates and unfolds these before they are guided to HslV for hydrolysis.</text>
</comment>
<comment type="subunit">
    <text evidence="1">A double ring-shaped homohexamer of HslV is capped on each side by a ring-shaped HslU homohexamer. The assembly of the HslU/HslV complex is dependent on binding of ATP.</text>
</comment>
<comment type="subcellular location">
    <subcellularLocation>
        <location evidence="1">Cytoplasm</location>
    </subcellularLocation>
</comment>
<comment type="similarity">
    <text evidence="1">Belongs to the ClpX chaperone family. HslU subfamily.</text>
</comment>
<protein>
    <recommendedName>
        <fullName evidence="1">ATP-dependent protease ATPase subunit HslU</fullName>
    </recommendedName>
    <alternativeName>
        <fullName evidence="1">Unfoldase HslU</fullName>
    </alternativeName>
</protein>
<feature type="chain" id="PRO_1000012730" description="ATP-dependent protease ATPase subunit HslU">
    <location>
        <begin position="1"/>
        <end position="446"/>
    </location>
</feature>
<feature type="binding site" evidence="1">
    <location>
        <position position="18"/>
    </location>
    <ligand>
        <name>ATP</name>
        <dbReference type="ChEBI" id="CHEBI:30616"/>
    </ligand>
</feature>
<feature type="binding site" evidence="1">
    <location>
        <begin position="60"/>
        <end position="65"/>
    </location>
    <ligand>
        <name>ATP</name>
        <dbReference type="ChEBI" id="CHEBI:30616"/>
    </ligand>
</feature>
<feature type="binding site" evidence="1">
    <location>
        <position position="259"/>
    </location>
    <ligand>
        <name>ATP</name>
        <dbReference type="ChEBI" id="CHEBI:30616"/>
    </ligand>
</feature>
<feature type="binding site" evidence="1">
    <location>
        <position position="324"/>
    </location>
    <ligand>
        <name>ATP</name>
        <dbReference type="ChEBI" id="CHEBI:30616"/>
    </ligand>
</feature>
<feature type="binding site" evidence="1">
    <location>
        <position position="396"/>
    </location>
    <ligand>
        <name>ATP</name>
        <dbReference type="ChEBI" id="CHEBI:30616"/>
    </ligand>
</feature>
<proteinExistence type="inferred from homology"/>
<name>HSLU_DECAR</name>
<sequence length="446" mass="49707">MTTMTPQEIVSELDKHIVGQKNAKKAVAIALRNRWRRSQVAEPLRQEITPKNILMIGPTGVGKTEIARRLARLANAPFIKIEATKFTEVGYVGRDVETIIRDLVEMAIKSHRERAMKAMRARAEDAAEERILDVLLPTVRGPNFFAENSESTAAENTTRQKFRKKLREGELDDKEVDIEVAAPSLQAEIFAPPGMEELTQQIQGMFQSVGGGKKKSRKLSIKEALKLLTDEEAAKLVNDDDVKQEAVKAVEQNGIVFLDELDKIASRSEMHGADVSRQGVQRDLLPLVEGTTVSTKYGMIKTDHILFIASGAFHLSKPSDLIPELQGRFPIRVELDSLSVADFECILTQTDACLTRQYQALLETEGVQLEFVEDGIRRLAEIAFQVNEKTENIGARRLHTVMEKLLEEVSFDAGKVGLDKVLIDAAYVNTKLGELAADEDLSRYVL</sequence>